<sequence>MVFRIASSPYTHNQRQTSRIMLLVLLAAVPGIAAQLWFFGWGTLVQILLASVSALLAEALVLKLRKQSVAATLKDNSALLTGLLLAVSIPPLAPWWMVVLGTVFAVIIAKQLYGGLGQNPFNPAMIGYVVLLISFPVQMTSWLPPHEIAVNIPGFIDAIQVIFSGHTASGGDMNTLRLGIDGISQATPLDTFKTSVRAGHSVEQIMQYPIYSGILAGAGWQWVNLAWLAGGVWLLWQKAIRWHIPLSFLVTLALCAMLGWLFSPETLAAPQIHLLSGATMLGAFFILTDPVTASTTNRGRLIFGALAGLLVWLIRSFGGYPDGVAFAVLLANITVPLIDYYTRPRVYGHRKG</sequence>
<proteinExistence type="evidence at protein level"/>
<gene>
    <name evidence="1 3" type="primary">rsxD</name>
    <name type="synonym">rnfD</name>
    <name type="synonym">ydgO</name>
    <name type="ordered locus">b1630</name>
    <name type="ordered locus">JW1622</name>
</gene>
<accession>P76182</accession>
<accession>Q2MB69</accession>
<organism>
    <name type="scientific">Escherichia coli (strain K12)</name>
    <dbReference type="NCBI Taxonomy" id="83333"/>
    <lineage>
        <taxon>Bacteria</taxon>
        <taxon>Pseudomonadati</taxon>
        <taxon>Pseudomonadota</taxon>
        <taxon>Gammaproteobacteria</taxon>
        <taxon>Enterobacterales</taxon>
        <taxon>Enterobacteriaceae</taxon>
        <taxon>Escherichia</taxon>
    </lineage>
</organism>
<keyword id="KW-0997">Cell inner membrane</keyword>
<keyword id="KW-1003">Cell membrane</keyword>
<keyword id="KW-0249">Electron transport</keyword>
<keyword id="KW-0285">Flavoprotein</keyword>
<keyword id="KW-0288">FMN</keyword>
<keyword id="KW-0472">Membrane</keyword>
<keyword id="KW-0597">Phosphoprotein</keyword>
<keyword id="KW-1185">Reference proteome</keyword>
<keyword id="KW-1278">Translocase</keyword>
<keyword id="KW-0812">Transmembrane</keyword>
<keyword id="KW-1133">Transmembrane helix</keyword>
<keyword id="KW-0813">Transport</keyword>
<protein>
    <recommendedName>
        <fullName evidence="1 4">Ion-translocating oxidoreductase complex subunit D</fullName>
        <ecNumber evidence="1 4">7.-.-.-</ecNumber>
    </recommendedName>
    <alternativeName>
        <fullName evidence="1 4">Rsx electron transport complex subunit D</fullName>
    </alternativeName>
</protein>
<evidence type="ECO:0000255" key="1">
    <source>
        <dbReference type="HAMAP-Rule" id="MF_00462"/>
    </source>
</evidence>
<evidence type="ECO:0000269" key="2">
    <source>
    </source>
</evidence>
<evidence type="ECO:0000303" key="3">
    <source>
    </source>
</evidence>
<evidence type="ECO:0000305" key="4"/>
<evidence type="ECO:0000305" key="5">
    <source>
    </source>
</evidence>
<dbReference type="EC" id="7.-.-.-" evidence="1 4"/>
<dbReference type="EMBL" id="U00096">
    <property type="protein sequence ID" value="AAC74702.1"/>
    <property type="molecule type" value="Genomic_DNA"/>
</dbReference>
<dbReference type="EMBL" id="AP009048">
    <property type="protein sequence ID" value="BAE76487.1"/>
    <property type="molecule type" value="Genomic_DNA"/>
</dbReference>
<dbReference type="PIR" id="H64919">
    <property type="entry name" value="H64919"/>
</dbReference>
<dbReference type="RefSeq" id="NP_416147.1">
    <property type="nucleotide sequence ID" value="NC_000913.3"/>
</dbReference>
<dbReference type="RefSeq" id="WP_000231927.1">
    <property type="nucleotide sequence ID" value="NZ_SSZK01000001.1"/>
</dbReference>
<dbReference type="SMR" id="P76182"/>
<dbReference type="BioGRID" id="4261729">
    <property type="interactions" value="72"/>
</dbReference>
<dbReference type="FunCoup" id="P76182">
    <property type="interactions" value="76"/>
</dbReference>
<dbReference type="STRING" id="511145.b1630"/>
<dbReference type="TCDB" id="3.D.6.1.4">
    <property type="family name" value="the ion (h(+) or na(+))-translocating nadh:ferredoxin oxidoreductase (nfo or rnf) family"/>
</dbReference>
<dbReference type="jPOST" id="P76182"/>
<dbReference type="PaxDb" id="511145-b1630"/>
<dbReference type="EnsemblBacteria" id="AAC74702">
    <property type="protein sequence ID" value="AAC74702"/>
    <property type="gene ID" value="b1630"/>
</dbReference>
<dbReference type="GeneID" id="946134"/>
<dbReference type="KEGG" id="ecj:JW1622"/>
<dbReference type="KEGG" id="eco:b1630"/>
<dbReference type="KEGG" id="ecoc:C3026_09365"/>
<dbReference type="PATRIC" id="fig|1411691.4.peg.631"/>
<dbReference type="EchoBASE" id="EB3695"/>
<dbReference type="eggNOG" id="COG4658">
    <property type="taxonomic scope" value="Bacteria"/>
</dbReference>
<dbReference type="HOGENOM" id="CLU_042020_0_0_6"/>
<dbReference type="InParanoid" id="P76182"/>
<dbReference type="OMA" id="RLWGGYP"/>
<dbReference type="OrthoDB" id="9776359at2"/>
<dbReference type="PhylomeDB" id="P76182"/>
<dbReference type="BioCyc" id="EcoCyc:G6874-MONOMER"/>
<dbReference type="PRO" id="PR:P76182"/>
<dbReference type="Proteomes" id="UP000000625">
    <property type="component" value="Chromosome"/>
</dbReference>
<dbReference type="GO" id="GO:1990204">
    <property type="term" value="C:oxidoreductase complex"/>
    <property type="evidence" value="ECO:0000314"/>
    <property type="project" value="EcoCyc"/>
</dbReference>
<dbReference type="GO" id="GO:0005886">
    <property type="term" value="C:plasma membrane"/>
    <property type="evidence" value="ECO:0000314"/>
    <property type="project" value="EcoCyc"/>
</dbReference>
<dbReference type="GO" id="GO:0098797">
    <property type="term" value="C:plasma membrane protein complex"/>
    <property type="evidence" value="ECO:0000314"/>
    <property type="project" value="EcoCyc"/>
</dbReference>
<dbReference type="GO" id="GO:0016651">
    <property type="term" value="F:oxidoreductase activity, acting on NAD(P)H"/>
    <property type="evidence" value="ECO:0000314"/>
    <property type="project" value="EcoCyc"/>
</dbReference>
<dbReference type="GO" id="GO:0022900">
    <property type="term" value="P:electron transport chain"/>
    <property type="evidence" value="ECO:0007669"/>
    <property type="project" value="UniProtKB-UniRule"/>
</dbReference>
<dbReference type="GO" id="GO:0055085">
    <property type="term" value="P:transmembrane transport"/>
    <property type="evidence" value="ECO:0007669"/>
    <property type="project" value="InterPro"/>
</dbReference>
<dbReference type="HAMAP" id="MF_00462">
    <property type="entry name" value="RsxD_RnfD"/>
    <property type="match status" value="1"/>
</dbReference>
<dbReference type="InterPro" id="IPR004338">
    <property type="entry name" value="NqrB/RnfD"/>
</dbReference>
<dbReference type="InterPro" id="IPR011303">
    <property type="entry name" value="RnfD_bac"/>
</dbReference>
<dbReference type="NCBIfam" id="NF002011">
    <property type="entry name" value="PRK00816.1"/>
    <property type="match status" value="1"/>
</dbReference>
<dbReference type="NCBIfam" id="TIGR01946">
    <property type="entry name" value="rnfD"/>
    <property type="match status" value="1"/>
</dbReference>
<dbReference type="PANTHER" id="PTHR30578">
    <property type="entry name" value="ELECTRON TRANSPORT COMPLEX PROTEIN RNFD"/>
    <property type="match status" value="1"/>
</dbReference>
<dbReference type="PANTHER" id="PTHR30578:SF0">
    <property type="entry name" value="ION-TRANSLOCATING OXIDOREDUCTASE COMPLEX SUBUNIT D"/>
    <property type="match status" value="1"/>
</dbReference>
<dbReference type="Pfam" id="PF03116">
    <property type="entry name" value="NQR2_RnfD_RnfE"/>
    <property type="match status" value="1"/>
</dbReference>
<feature type="chain" id="PRO_0000074453" description="Ion-translocating oxidoreductase complex subunit D">
    <location>
        <begin position="1"/>
        <end position="352"/>
    </location>
</feature>
<feature type="transmembrane region" description="Helical" evidence="1">
    <location>
        <begin position="20"/>
        <end position="40"/>
    </location>
</feature>
<feature type="transmembrane region" description="Helical" evidence="1">
    <location>
        <begin position="42"/>
        <end position="62"/>
    </location>
</feature>
<feature type="transmembrane region" description="Helical" evidence="1">
    <location>
        <begin position="78"/>
        <end position="109"/>
    </location>
</feature>
<feature type="transmembrane region" description="Helical" evidence="1">
    <location>
        <begin position="123"/>
        <end position="143"/>
    </location>
</feature>
<feature type="transmembrane region" description="Helical" evidence="1">
    <location>
        <begin position="148"/>
        <end position="168"/>
    </location>
</feature>
<feature type="transmembrane region" description="Helical" evidence="1">
    <location>
        <begin position="214"/>
        <end position="234"/>
    </location>
</feature>
<feature type="transmembrane region" description="Helical" evidence="1">
    <location>
        <begin position="242"/>
        <end position="262"/>
    </location>
</feature>
<feature type="transmembrane region" description="Helical" evidence="1">
    <location>
        <begin position="267"/>
        <end position="287"/>
    </location>
</feature>
<feature type="transmembrane region" description="Helical" evidence="1">
    <location>
        <begin position="301"/>
        <end position="321"/>
    </location>
</feature>
<feature type="transmembrane region" description="Helical" evidence="1">
    <location>
        <begin position="322"/>
        <end position="342"/>
    </location>
</feature>
<feature type="modified residue" description="FMN phosphoryl threonine" evidence="1">
    <location>
        <position position="187"/>
    </location>
</feature>
<reference key="1">
    <citation type="journal article" date="1997" name="Science">
        <title>The complete genome sequence of Escherichia coli K-12.</title>
        <authorList>
            <person name="Blattner F.R."/>
            <person name="Plunkett G. III"/>
            <person name="Bloch C.A."/>
            <person name="Perna N.T."/>
            <person name="Burland V."/>
            <person name="Riley M."/>
            <person name="Collado-Vides J."/>
            <person name="Glasner J.D."/>
            <person name="Rode C.K."/>
            <person name="Mayhew G.F."/>
            <person name="Gregor J."/>
            <person name="Davis N.W."/>
            <person name="Kirkpatrick H.A."/>
            <person name="Goeden M.A."/>
            <person name="Rose D.J."/>
            <person name="Mau B."/>
            <person name="Shao Y."/>
        </authorList>
    </citation>
    <scope>NUCLEOTIDE SEQUENCE [LARGE SCALE GENOMIC DNA]</scope>
    <source>
        <strain>K12 / MG1655 / ATCC 47076</strain>
    </source>
</reference>
<reference key="2">
    <citation type="journal article" date="2006" name="Mol. Syst. Biol.">
        <title>Highly accurate genome sequences of Escherichia coli K-12 strains MG1655 and W3110.</title>
        <authorList>
            <person name="Hayashi K."/>
            <person name="Morooka N."/>
            <person name="Yamamoto Y."/>
            <person name="Fujita K."/>
            <person name="Isono K."/>
            <person name="Choi S."/>
            <person name="Ohtsubo E."/>
            <person name="Baba T."/>
            <person name="Wanner B.L."/>
            <person name="Mori H."/>
            <person name="Horiuchi T."/>
        </authorList>
    </citation>
    <scope>NUCLEOTIDE SEQUENCE [LARGE SCALE GENOMIC DNA]</scope>
    <source>
        <strain>K12 / W3110 / ATCC 27325 / DSM 5911</strain>
    </source>
</reference>
<reference key="3">
    <citation type="journal article" date="2003" name="EMBO J.">
        <title>A reducing system of the superoxide sensor SoxR in Escherichia coli.</title>
        <authorList>
            <person name="Koo M.S."/>
            <person name="Lee J.H."/>
            <person name="Rah S.Y."/>
            <person name="Yeo W.S."/>
            <person name="Lee J.W."/>
            <person name="Lee K.L."/>
            <person name="Koh Y.S."/>
            <person name="Kang S.O."/>
            <person name="Roe J.H."/>
        </authorList>
    </citation>
    <scope>FUNCTION</scope>
    <scope>SUBUNIT</scope>
    <scope>GENE NAME</scope>
</reference>
<comment type="function">
    <text evidence="1 2">Part of a membrane-bound complex that couples electron transfer with translocation of ions across the membrane (By similarity). Required to maintain the reduced state of SoxR. Probably transfers electron from NAD(P)H to SoxR (PubMed:12773378).</text>
</comment>
<comment type="cofactor">
    <cofactor evidence="1">
        <name>FMN</name>
        <dbReference type="ChEBI" id="CHEBI:58210"/>
    </cofactor>
</comment>
<comment type="subunit">
    <text evidence="1 5">The complex is composed of six subunits: RsxA, RsxB, RsxC, RsxD, RsxE and RsxG.</text>
</comment>
<comment type="subcellular location">
    <subcellularLocation>
        <location evidence="1">Cell inner membrane</location>
        <topology evidence="1">Multi-pass membrane protein</topology>
    </subcellularLocation>
</comment>
<comment type="similarity">
    <text evidence="1">Belongs to the NqrB/RnfD family.</text>
</comment>
<name>RSXD_ECOLI</name>